<dbReference type="EMBL" id="AB017067">
    <property type="protein sequence ID" value="BAB08424.1"/>
    <property type="molecule type" value="Genomic_DNA"/>
</dbReference>
<dbReference type="EMBL" id="CP002688">
    <property type="protein sequence ID" value="AED94743.1"/>
    <property type="molecule type" value="Genomic_DNA"/>
</dbReference>
<dbReference type="EMBL" id="CP002688">
    <property type="protein sequence ID" value="ANM69466.1"/>
    <property type="molecule type" value="Genomic_DNA"/>
</dbReference>
<dbReference type="EMBL" id="CP002688">
    <property type="protein sequence ID" value="ANM69467.1"/>
    <property type="molecule type" value="Genomic_DNA"/>
</dbReference>
<dbReference type="EMBL" id="BT002847">
    <property type="protein sequence ID" value="AAO22665.1"/>
    <property type="molecule type" value="mRNA"/>
</dbReference>
<dbReference type="EMBL" id="BT004431">
    <property type="protein sequence ID" value="AAO42425.1"/>
    <property type="molecule type" value="mRNA"/>
</dbReference>
<dbReference type="RefSeq" id="NP_001331137.1">
    <property type="nucleotide sequence ID" value="NM_001344426.1"/>
</dbReference>
<dbReference type="RefSeq" id="NP_001331138.1">
    <property type="nucleotide sequence ID" value="NM_001344425.1"/>
</dbReference>
<dbReference type="RefSeq" id="NP_199006.1">
    <property type="nucleotide sequence ID" value="NM_123556.3"/>
</dbReference>
<dbReference type="SMR" id="Q9FHZ2"/>
<dbReference type="BioGRID" id="19447">
    <property type="interactions" value="3"/>
</dbReference>
<dbReference type="FunCoup" id="Q9FHZ2">
    <property type="interactions" value="3096"/>
</dbReference>
<dbReference type="IntAct" id="Q9FHZ2">
    <property type="interactions" value="9"/>
</dbReference>
<dbReference type="STRING" id="3702.Q9FHZ2"/>
<dbReference type="iPTMnet" id="Q9FHZ2"/>
<dbReference type="PaxDb" id="3702-AT5G41910.1"/>
<dbReference type="ProteomicsDB" id="250835"/>
<dbReference type="DNASU" id="834196"/>
<dbReference type="EnsemblPlants" id="AT5G41910.1">
    <property type="protein sequence ID" value="AT5G41910.1"/>
    <property type="gene ID" value="AT5G41910"/>
</dbReference>
<dbReference type="EnsemblPlants" id="AT5G41910.2">
    <property type="protein sequence ID" value="AT5G41910.2"/>
    <property type="gene ID" value="AT5G41910"/>
</dbReference>
<dbReference type="EnsemblPlants" id="AT5G41910.3">
    <property type="protein sequence ID" value="AT5G41910.3"/>
    <property type="gene ID" value="AT5G41910"/>
</dbReference>
<dbReference type="GeneID" id="834196"/>
<dbReference type="Gramene" id="AT5G41910.1">
    <property type="protein sequence ID" value="AT5G41910.1"/>
    <property type="gene ID" value="AT5G41910"/>
</dbReference>
<dbReference type="Gramene" id="AT5G41910.2">
    <property type="protein sequence ID" value="AT5G41910.2"/>
    <property type="gene ID" value="AT5G41910"/>
</dbReference>
<dbReference type="Gramene" id="AT5G41910.3">
    <property type="protein sequence ID" value="AT5G41910.3"/>
    <property type="gene ID" value="AT5G41910"/>
</dbReference>
<dbReference type="KEGG" id="ath:AT5G41910"/>
<dbReference type="Araport" id="AT5G41910"/>
<dbReference type="TAIR" id="AT5G41910">
    <property type="gene designation" value="MED10A"/>
</dbReference>
<dbReference type="eggNOG" id="KOG3046">
    <property type="taxonomic scope" value="Eukaryota"/>
</dbReference>
<dbReference type="HOGENOM" id="CLU_096169_2_0_1"/>
<dbReference type="InParanoid" id="Q9FHZ2"/>
<dbReference type="OMA" id="IMESCLQ"/>
<dbReference type="PhylomeDB" id="Q9FHZ2"/>
<dbReference type="PRO" id="PR:Q9FHZ2"/>
<dbReference type="Proteomes" id="UP000006548">
    <property type="component" value="Chromosome 5"/>
</dbReference>
<dbReference type="ExpressionAtlas" id="Q9FHZ2">
    <property type="expression patterns" value="baseline and differential"/>
</dbReference>
<dbReference type="GO" id="GO:0016592">
    <property type="term" value="C:mediator complex"/>
    <property type="evidence" value="ECO:0000314"/>
    <property type="project" value="UniProtKB"/>
</dbReference>
<dbReference type="GO" id="GO:0003712">
    <property type="term" value="F:transcription coregulator activity"/>
    <property type="evidence" value="ECO:0007669"/>
    <property type="project" value="InterPro"/>
</dbReference>
<dbReference type="GO" id="GO:0006357">
    <property type="term" value="P:regulation of transcription by RNA polymerase II"/>
    <property type="evidence" value="ECO:0007669"/>
    <property type="project" value="InterPro"/>
</dbReference>
<dbReference type="InterPro" id="IPR019145">
    <property type="entry name" value="Mediator_Med10"/>
</dbReference>
<dbReference type="PANTHER" id="PTHR13345">
    <property type="entry name" value="MEDIATOR OF RNA POLYMERASE II TRANSCRIPTION SUBUNIT 10"/>
    <property type="match status" value="1"/>
</dbReference>
<dbReference type="PANTHER" id="PTHR13345:SF14">
    <property type="entry name" value="MEDIATOR OF RNA POLYMERASE II TRANSCRIPTION SUBUNIT 10A-RELATED"/>
    <property type="match status" value="1"/>
</dbReference>
<dbReference type="Pfam" id="PF09748">
    <property type="entry name" value="Med10"/>
    <property type="match status" value="1"/>
</dbReference>
<name>MD10A_ARATH</name>
<reference key="1">
    <citation type="journal article" date="1999" name="DNA Res.">
        <title>Structural analysis of Arabidopsis thaliana chromosome 5. IX. Sequence features of the regions of 1,011,550 bp covered by seventeen P1 and TAC clones.</title>
        <authorList>
            <person name="Kaneko T."/>
            <person name="Katoh T."/>
            <person name="Sato S."/>
            <person name="Nakamura Y."/>
            <person name="Asamizu E."/>
            <person name="Kotani H."/>
            <person name="Miyajima N."/>
            <person name="Tabata S."/>
        </authorList>
    </citation>
    <scope>NUCLEOTIDE SEQUENCE [LARGE SCALE GENOMIC DNA]</scope>
    <source>
        <strain>cv. Columbia</strain>
    </source>
</reference>
<reference key="2">
    <citation type="journal article" date="2017" name="Plant J.">
        <title>Araport11: a complete reannotation of the Arabidopsis thaliana reference genome.</title>
        <authorList>
            <person name="Cheng C.Y."/>
            <person name="Krishnakumar V."/>
            <person name="Chan A.P."/>
            <person name="Thibaud-Nissen F."/>
            <person name="Schobel S."/>
            <person name="Town C.D."/>
        </authorList>
    </citation>
    <scope>GENOME REANNOTATION</scope>
    <source>
        <strain>cv. Columbia</strain>
    </source>
</reference>
<reference key="3">
    <citation type="journal article" date="2003" name="Science">
        <title>Empirical analysis of transcriptional activity in the Arabidopsis genome.</title>
        <authorList>
            <person name="Yamada K."/>
            <person name="Lim J."/>
            <person name="Dale J.M."/>
            <person name="Chen H."/>
            <person name="Shinn P."/>
            <person name="Palm C.J."/>
            <person name="Southwick A.M."/>
            <person name="Wu H.C."/>
            <person name="Kim C.J."/>
            <person name="Nguyen M."/>
            <person name="Pham P.K."/>
            <person name="Cheuk R.F."/>
            <person name="Karlin-Newmann G."/>
            <person name="Liu S.X."/>
            <person name="Lam B."/>
            <person name="Sakano H."/>
            <person name="Wu T."/>
            <person name="Yu G."/>
            <person name="Miranda M."/>
            <person name="Quach H.L."/>
            <person name="Tripp M."/>
            <person name="Chang C.H."/>
            <person name="Lee J.M."/>
            <person name="Toriumi M.J."/>
            <person name="Chan M.M."/>
            <person name="Tang C.C."/>
            <person name="Onodera C.S."/>
            <person name="Deng J.M."/>
            <person name="Akiyama K."/>
            <person name="Ansari Y."/>
            <person name="Arakawa T."/>
            <person name="Banh J."/>
            <person name="Banno F."/>
            <person name="Bowser L."/>
            <person name="Brooks S.Y."/>
            <person name="Carninci P."/>
            <person name="Chao Q."/>
            <person name="Choy N."/>
            <person name="Enju A."/>
            <person name="Goldsmith A.D."/>
            <person name="Gurjal M."/>
            <person name="Hansen N.F."/>
            <person name="Hayashizaki Y."/>
            <person name="Johnson-Hopson C."/>
            <person name="Hsuan V.W."/>
            <person name="Iida K."/>
            <person name="Karnes M."/>
            <person name="Khan S."/>
            <person name="Koesema E."/>
            <person name="Ishida J."/>
            <person name="Jiang P.X."/>
            <person name="Jones T."/>
            <person name="Kawai J."/>
            <person name="Kamiya A."/>
            <person name="Meyers C."/>
            <person name="Nakajima M."/>
            <person name="Narusaka M."/>
            <person name="Seki M."/>
            <person name="Sakurai T."/>
            <person name="Satou M."/>
            <person name="Tamse R."/>
            <person name="Vaysberg M."/>
            <person name="Wallender E.K."/>
            <person name="Wong C."/>
            <person name="Yamamura Y."/>
            <person name="Yuan S."/>
            <person name="Shinozaki K."/>
            <person name="Davis R.W."/>
            <person name="Theologis A."/>
            <person name="Ecker J.R."/>
        </authorList>
    </citation>
    <scope>NUCLEOTIDE SEQUENCE [LARGE SCALE MRNA]</scope>
    <source>
        <strain>cv. Columbia</strain>
    </source>
</reference>
<reference key="4">
    <citation type="journal article" date="2007" name="Mol. Cell">
        <title>Purification of a plant mediator from Arabidopsis thaliana identifies PFT1 as the Med25 subunit.</title>
        <authorList>
            <person name="Baeckstroem S."/>
            <person name="Elfving N."/>
            <person name="Nilsson R."/>
            <person name="Wingsle G."/>
            <person name="Bjoerklund S."/>
        </authorList>
    </citation>
    <scope>IDENTIFICATION BY MASS SPECTROMETRY</scope>
    <scope>SUBUNIT</scope>
    <scope>NOMENCLATURE</scope>
</reference>
<reference key="5">
    <citation type="journal article" date="2011" name="Plant Physiol.">
        <title>The Mediator complex in plants: structure, phylogeny, and expression profiling of representative genes in a dicot (Arabidopsis) and a monocot (rice) during reproduction and abiotic stress.</title>
        <authorList>
            <person name="Mathur S."/>
            <person name="Vyas S."/>
            <person name="Kapoor S."/>
            <person name="Tyagi A.K."/>
        </authorList>
    </citation>
    <scope>IDENTIFICATION</scope>
    <scope>SUBUNIT</scope>
    <scope>NOMENCLATURE</scope>
</reference>
<reference key="6">
    <citation type="journal article" date="2015" name="Biochem. J.">
        <title>Biochemical and redox characterization of the mediator complex and its associated transcription factor GeBPL, a GLABROUS1 enhancer binding protein.</title>
        <authorList>
            <person name="Shaikhali J."/>
            <person name="Davoine C."/>
            <person name="Braennstroem K."/>
            <person name="Rouhier N."/>
            <person name="Bygdell J."/>
            <person name="Bjoerklund S."/>
            <person name="Wingsle G."/>
        </authorList>
    </citation>
    <scope>SUBUNIT</scope>
    <scope>MUTAGENESIS OF CYS-88 AND CYS-118</scope>
    <scope>INTERACTION WITH GEBPL</scope>
</reference>
<evidence type="ECO:0000269" key="1">
    <source>
    </source>
</evidence>
<evidence type="ECO:0000269" key="2">
    <source>
    </source>
</evidence>
<evidence type="ECO:0000269" key="3">
    <source>
    </source>
</evidence>
<evidence type="ECO:0000303" key="4">
    <source>
    </source>
</evidence>
<evidence type="ECO:0000303" key="5">
    <source>
    </source>
</evidence>
<evidence type="ECO:0000305" key="6"/>
<evidence type="ECO:0000305" key="7">
    <source>
    </source>
</evidence>
<evidence type="ECO:0000305" key="8">
    <source>
    </source>
</evidence>
<evidence type="ECO:0000312" key="9">
    <source>
        <dbReference type="Araport" id="AT5G41910"/>
    </source>
</evidence>
<evidence type="ECO:0000312" key="10">
    <source>
        <dbReference type="EMBL" id="BAB08424.1"/>
    </source>
</evidence>
<comment type="function">
    <text evidence="7 8">Component of the Mediator complex, a coactivator involved in the regulated transcription of nearly all RNA polymerase II-dependent genes. Mediator functions as a bridge to convey information from gene-specific regulatory proteins to the basal RNA polymerase II transcription machinery. The Mediator complex, having a compact conformation in its free form, is recruited to promoters by direct interactions with regulatory proteins and serves for the assembly of a functional pre-initiation complex with RNA polymerase II and the general transcription factors.</text>
</comment>
<comment type="subunit">
    <text evidence="1 2 3">Mono-, di- and oligomers (PubMed:25877331). Component of the Mediator complex (PubMed:17560376, PubMed:22021418). Interacts with GEBPL (PubMed:25877331).</text>
</comment>
<comment type="subcellular location">
    <subcellularLocation>
        <location evidence="6">Nucleus</location>
    </subcellularLocation>
</comment>
<comment type="similarity">
    <text evidence="6">Belongs to the Mediator complex subunit 10 family.</text>
</comment>
<keyword id="KW-0539">Nucleus</keyword>
<keyword id="KW-1185">Reference proteome</keyword>
<keyword id="KW-0804">Transcription</keyword>
<keyword id="KW-0805">Transcription regulation</keyword>
<accession>Q9FHZ2</accession>
<proteinExistence type="evidence at protein level"/>
<feature type="chain" id="PRO_0000418114" description="Mediator of RNA polymerase II transcription subunit 10a">
    <location>
        <begin position="1"/>
        <end position="186"/>
    </location>
</feature>
<feature type="mutagenesis site" description="Loss of oligomerization. Loss of oligomerization and dimerization; when associated with S-118." evidence="3">
    <original>C</original>
    <variation>S</variation>
    <location>
        <position position="88"/>
    </location>
</feature>
<feature type="mutagenesis site" description="Loss of oligomerization. Loss of oligomerization and dimerization; when associated with S-88." evidence="3">
    <original>C</original>
    <variation>S</variation>
    <location>
        <position position="118"/>
    </location>
</feature>
<protein>
    <recommendedName>
        <fullName evidence="4">Mediator of RNA polymerase II transcription subunit 10a</fullName>
    </recommendedName>
</protein>
<sequence length="186" mass="20727">MDQTQNTIAGIGEINGSIKTEINAIATVDDSNEKLNQIINSNQKILELLHQLKLTVSSFTPASQLHLLQRLNSLVMELDNMAKLSDKCNIQVPIEVLNLIDDGKNPDEFTKDVLNKNCIAKNQVTKGKSDAFKGLRKHLLEELEQAFPDEVDRYRDIRASYAAEAKRLAQTQSVLPNGDAKVKSEL</sequence>
<gene>
    <name evidence="4" type="primary">MED10A</name>
    <name evidence="5" type="synonym">MED10_2</name>
    <name evidence="9" type="ordered locus">At5g41910</name>
    <name evidence="10" type="ORF">MJC20.1</name>
</gene>
<organism>
    <name type="scientific">Arabidopsis thaliana</name>
    <name type="common">Mouse-ear cress</name>
    <dbReference type="NCBI Taxonomy" id="3702"/>
    <lineage>
        <taxon>Eukaryota</taxon>
        <taxon>Viridiplantae</taxon>
        <taxon>Streptophyta</taxon>
        <taxon>Embryophyta</taxon>
        <taxon>Tracheophyta</taxon>
        <taxon>Spermatophyta</taxon>
        <taxon>Magnoliopsida</taxon>
        <taxon>eudicotyledons</taxon>
        <taxon>Gunneridae</taxon>
        <taxon>Pentapetalae</taxon>
        <taxon>rosids</taxon>
        <taxon>malvids</taxon>
        <taxon>Brassicales</taxon>
        <taxon>Brassicaceae</taxon>
        <taxon>Camelineae</taxon>
        <taxon>Arabidopsis</taxon>
    </lineage>
</organism>